<evidence type="ECO:0000255" key="1">
    <source>
        <dbReference type="HAMAP-Rule" id="MF_01698"/>
    </source>
</evidence>
<name>MSHD_SACVD</name>
<organism>
    <name type="scientific">Saccharomonospora viridis (strain ATCC 15386 / DSM 43017 / JCM 3036 / CCUG 5913 / NBRC 12207 / NCIMB 9602 / P101)</name>
    <name type="common">Thermoactinomyces viridis</name>
    <dbReference type="NCBI Taxonomy" id="471857"/>
    <lineage>
        <taxon>Bacteria</taxon>
        <taxon>Bacillati</taxon>
        <taxon>Actinomycetota</taxon>
        <taxon>Actinomycetes</taxon>
        <taxon>Pseudonocardiales</taxon>
        <taxon>Pseudonocardiaceae</taxon>
        <taxon>Saccharomonospora</taxon>
    </lineage>
</organism>
<protein>
    <recommendedName>
        <fullName evidence="1">Mycothiol acetyltransferase</fullName>
        <shortName evidence="1">MSH acetyltransferase</shortName>
        <ecNumber evidence="1">2.3.1.189</ecNumber>
    </recommendedName>
    <alternativeName>
        <fullName evidence="1">Mycothiol synthase</fullName>
    </alternativeName>
</protein>
<comment type="function">
    <text evidence="1">Catalyzes the transfer of acetyl from acetyl-CoA to desacetylmycothiol (Cys-GlcN-Ins) to form mycothiol.</text>
</comment>
<comment type="catalytic activity">
    <reaction evidence="1">
        <text>1D-myo-inositol 2-(L-cysteinylamino)-2-deoxy-alpha-D-glucopyranoside + acetyl-CoA = mycothiol + CoA + H(+)</text>
        <dbReference type="Rhea" id="RHEA:26172"/>
        <dbReference type="ChEBI" id="CHEBI:15378"/>
        <dbReference type="ChEBI" id="CHEBI:16768"/>
        <dbReference type="ChEBI" id="CHEBI:57287"/>
        <dbReference type="ChEBI" id="CHEBI:57288"/>
        <dbReference type="ChEBI" id="CHEBI:58887"/>
        <dbReference type="EC" id="2.3.1.189"/>
    </reaction>
</comment>
<comment type="subunit">
    <text evidence="1">Monomer.</text>
</comment>
<comment type="similarity">
    <text evidence="1">Belongs to the acetyltransferase family. MshD subfamily.</text>
</comment>
<proteinExistence type="inferred from homology"/>
<keyword id="KW-0012">Acyltransferase</keyword>
<keyword id="KW-1185">Reference proteome</keyword>
<keyword id="KW-0677">Repeat</keyword>
<keyword id="KW-0808">Transferase</keyword>
<gene>
    <name evidence="1" type="primary">mshD</name>
    <name type="ordered locus">Svir_37660</name>
</gene>
<feature type="chain" id="PRO_0000400294" description="Mycothiol acetyltransferase">
    <location>
        <begin position="1"/>
        <end position="306"/>
    </location>
</feature>
<feature type="domain" description="N-acetyltransferase 1" evidence="1">
    <location>
        <begin position="5"/>
        <end position="162"/>
    </location>
</feature>
<feature type="domain" description="N-acetyltransferase 2" evidence="1">
    <location>
        <begin position="155"/>
        <end position="306"/>
    </location>
</feature>
<feature type="binding site" evidence="1">
    <location>
        <begin position="82"/>
        <end position="84"/>
    </location>
    <ligand>
        <name>acetyl-CoA</name>
        <dbReference type="ChEBI" id="CHEBI:57288"/>
        <label>1</label>
    </ligand>
</feature>
<feature type="binding site" evidence="1">
    <location>
        <begin position="90"/>
        <end position="95"/>
    </location>
    <ligand>
        <name>acetyl-CoA</name>
        <dbReference type="ChEBI" id="CHEBI:57288"/>
        <label>1</label>
    </ligand>
</feature>
<feature type="binding site" evidence="1">
    <location>
        <position position="182"/>
    </location>
    <ligand>
        <name>1D-myo-inositol 2-(L-cysteinylamino)-2-deoxy-alpha-D-glucopyranoside</name>
        <dbReference type="ChEBI" id="CHEBI:58887"/>
    </ligand>
</feature>
<feature type="binding site" evidence="1">
    <location>
        <position position="222"/>
    </location>
    <ligand>
        <name>1D-myo-inositol 2-(L-cysteinylamino)-2-deoxy-alpha-D-glucopyranoside</name>
        <dbReference type="ChEBI" id="CHEBI:58887"/>
    </ligand>
</feature>
<feature type="binding site" evidence="1">
    <location>
        <position position="238"/>
    </location>
    <ligand>
        <name>1D-myo-inositol 2-(L-cysteinylamino)-2-deoxy-alpha-D-glucopyranoside</name>
        <dbReference type="ChEBI" id="CHEBI:58887"/>
    </ligand>
</feature>
<feature type="binding site" evidence="1">
    <location>
        <begin position="242"/>
        <end position="244"/>
    </location>
    <ligand>
        <name>acetyl-CoA</name>
        <dbReference type="ChEBI" id="CHEBI:57288"/>
        <label>2</label>
    </ligand>
</feature>
<feature type="binding site" evidence="1">
    <location>
        <begin position="249"/>
        <end position="255"/>
    </location>
    <ligand>
        <name>acetyl-CoA</name>
        <dbReference type="ChEBI" id="CHEBI:57288"/>
        <label>2</label>
    </ligand>
</feature>
<feature type="binding site" evidence="1">
    <location>
        <position position="276"/>
    </location>
    <ligand>
        <name>1D-myo-inositol 2-(L-cysteinylamino)-2-deoxy-alpha-D-glucopyranoside</name>
        <dbReference type="ChEBI" id="CHEBI:58887"/>
    </ligand>
</feature>
<reference key="1">
    <citation type="journal article" date="2009" name="Stand. Genomic Sci.">
        <title>Complete genome sequence of Saccharomonospora viridis type strain (P101).</title>
        <authorList>
            <person name="Pati A."/>
            <person name="Sikorski J."/>
            <person name="Nolan M."/>
            <person name="Lapidus A."/>
            <person name="Copeland A."/>
            <person name="Glavina Del Rio T."/>
            <person name="Lucas S."/>
            <person name="Chen F."/>
            <person name="Tice H."/>
            <person name="Pitluck S."/>
            <person name="Cheng J.F."/>
            <person name="Chertkov O."/>
            <person name="Brettin T."/>
            <person name="Han C."/>
            <person name="Detter J.C."/>
            <person name="Kuske C."/>
            <person name="Bruce D."/>
            <person name="Goodwin L."/>
            <person name="Chain P."/>
            <person name="D'haeseleer P."/>
            <person name="Chen A."/>
            <person name="Palaniappan K."/>
            <person name="Ivanova N."/>
            <person name="Mavromatis K."/>
            <person name="Mikhailova N."/>
            <person name="Rohde M."/>
            <person name="Tindall B.J."/>
            <person name="Goker M."/>
            <person name="Bristow J."/>
            <person name="Eisen J.A."/>
            <person name="Markowitz V."/>
            <person name="Hugenholtz P."/>
            <person name="Kyrpides N.C."/>
            <person name="Klenk H.P."/>
        </authorList>
    </citation>
    <scope>NUCLEOTIDE SEQUENCE [LARGE SCALE GENOMIC DNA]</scope>
    <source>
        <strain>ATCC 15386 / DSM 43017 / JCM 3036 / CCUG 5913 / NBRC 12207 / NCIMB 9602 / P101</strain>
    </source>
</reference>
<dbReference type="EC" id="2.3.1.189" evidence="1"/>
<dbReference type="EMBL" id="CP001683">
    <property type="protein sequence ID" value="ACU98710.1"/>
    <property type="molecule type" value="Genomic_DNA"/>
</dbReference>
<dbReference type="RefSeq" id="WP_015788019.1">
    <property type="nucleotide sequence ID" value="NC_013159.1"/>
</dbReference>
<dbReference type="SMR" id="C7MRC4"/>
<dbReference type="STRING" id="471857.Svir_37660"/>
<dbReference type="KEGG" id="svi:Svir_37660"/>
<dbReference type="eggNOG" id="COG0454">
    <property type="taxonomic scope" value="Bacteria"/>
</dbReference>
<dbReference type="eggNOG" id="COG0456">
    <property type="taxonomic scope" value="Bacteria"/>
</dbReference>
<dbReference type="HOGENOM" id="CLU_068014_0_0_11"/>
<dbReference type="Proteomes" id="UP000000841">
    <property type="component" value="Chromosome"/>
</dbReference>
<dbReference type="GO" id="GO:0035447">
    <property type="term" value="F:mycothiol synthase activity"/>
    <property type="evidence" value="ECO:0007669"/>
    <property type="project" value="UniProtKB-UniRule"/>
</dbReference>
<dbReference type="GO" id="GO:0008999">
    <property type="term" value="F:protein-N-terminal-alanine acetyltransferase activity"/>
    <property type="evidence" value="ECO:0007669"/>
    <property type="project" value="TreeGrafter"/>
</dbReference>
<dbReference type="GO" id="GO:0010125">
    <property type="term" value="P:mycothiol biosynthetic process"/>
    <property type="evidence" value="ECO:0007669"/>
    <property type="project" value="UniProtKB-UniRule"/>
</dbReference>
<dbReference type="CDD" id="cd04301">
    <property type="entry name" value="NAT_SF"/>
    <property type="match status" value="2"/>
</dbReference>
<dbReference type="Gene3D" id="3.40.630.30">
    <property type="match status" value="1"/>
</dbReference>
<dbReference type="HAMAP" id="MF_01698">
    <property type="entry name" value="MshD"/>
    <property type="match status" value="1"/>
</dbReference>
<dbReference type="InterPro" id="IPR016181">
    <property type="entry name" value="Acyl_CoA_acyltransferase"/>
</dbReference>
<dbReference type="InterPro" id="IPR000182">
    <property type="entry name" value="GNAT_dom"/>
</dbReference>
<dbReference type="InterPro" id="IPR050276">
    <property type="entry name" value="MshD_Acetyltransferase"/>
</dbReference>
<dbReference type="InterPro" id="IPR017813">
    <property type="entry name" value="Mycothiol_AcTrfase"/>
</dbReference>
<dbReference type="NCBIfam" id="TIGR03448">
    <property type="entry name" value="mycothiol_MshD"/>
    <property type="match status" value="1"/>
</dbReference>
<dbReference type="PANTHER" id="PTHR43617">
    <property type="entry name" value="L-AMINO ACID N-ACETYLTRANSFERASE"/>
    <property type="match status" value="1"/>
</dbReference>
<dbReference type="PANTHER" id="PTHR43617:SF31">
    <property type="entry name" value="MYCOTHIOL ACETYLTRANSFERASE"/>
    <property type="match status" value="1"/>
</dbReference>
<dbReference type="Pfam" id="PF00583">
    <property type="entry name" value="Acetyltransf_1"/>
    <property type="match status" value="2"/>
</dbReference>
<dbReference type="PIRSF" id="PIRSF021524">
    <property type="entry name" value="MSH_acetyltransferase"/>
    <property type="match status" value="1"/>
</dbReference>
<dbReference type="SUPFAM" id="SSF55729">
    <property type="entry name" value="Acyl-CoA N-acyltransferases (Nat)"/>
    <property type="match status" value="1"/>
</dbReference>
<dbReference type="PROSITE" id="PS51186">
    <property type="entry name" value="GNAT"/>
    <property type="match status" value="2"/>
</dbReference>
<sequence length="306" mass="33851">MRNFVWAEELDADRIDDVRALLLAARETDGRPEVEPDGPLPGEFSGPRHLLCFSGEGAAAELVGYAHLDVRGDAFGRQVAELIVHPAHRRRGHGTALLEEVLRHADRLRIWSHGDHPAAARLAERFGLSRARELLVMSASSAEQEWPKPRLPEGVRLRTFVPGQDEEAVIAVNARAFDWHPEQSQFDVKALREAQRESWFDADGFFLAENAEGRVVGFHWTKVHPANPNRFGGRPVGEVYVVGVDPDAQGGGLGKALTLAGLRHLRQRGLEQVILYVEGDNAPAIAVYRKLGFETVETDVQYAQGS</sequence>
<accession>C7MRC4</accession>